<gene>
    <name type="primary">mpt53</name>
    <name type="synonym">mpb53</name>
    <name type="ordered locus">Rv2878c</name>
    <name type="ORF">MTCY274.09c</name>
</gene>
<feature type="signal peptide" evidence="2">
    <location>
        <begin position="1"/>
        <end position="38"/>
    </location>
</feature>
<feature type="chain" id="PRO_0000034290" description="Soluble secreted antigen MPT53">
    <location>
        <begin position="39"/>
        <end position="173"/>
    </location>
</feature>
<feature type="disulfide bond" description="Redox-active" evidence="1">
    <location>
        <begin position="73"/>
        <end position="76"/>
    </location>
</feature>
<feature type="helix" evidence="5">
    <location>
        <begin position="39"/>
        <end position="42"/>
    </location>
</feature>
<feature type="strand" evidence="5">
    <location>
        <begin position="45"/>
        <end position="48"/>
    </location>
</feature>
<feature type="strand" evidence="5">
    <location>
        <begin position="53"/>
        <end position="55"/>
    </location>
</feature>
<feature type="helix" evidence="5">
    <location>
        <begin position="56"/>
        <end position="59"/>
    </location>
</feature>
<feature type="strand" evidence="5">
    <location>
        <begin position="64"/>
        <end position="69"/>
    </location>
</feature>
<feature type="helix" evidence="5">
    <location>
        <begin position="74"/>
        <end position="89"/>
    </location>
</feature>
<feature type="strand" evidence="5">
    <location>
        <begin position="93"/>
        <end position="99"/>
    </location>
</feature>
<feature type="helix" evidence="5">
    <location>
        <begin position="104"/>
        <end position="114"/>
    </location>
</feature>
<feature type="strand" evidence="5">
    <location>
        <begin position="118"/>
        <end position="122"/>
    </location>
</feature>
<feature type="helix" evidence="5">
    <location>
        <begin position="127"/>
        <end position="131"/>
    </location>
</feature>
<feature type="strand" evidence="5">
    <location>
        <begin position="136"/>
        <end position="143"/>
    </location>
</feature>
<feature type="strand" evidence="5">
    <location>
        <begin position="149"/>
        <end position="152"/>
    </location>
</feature>
<feature type="strand" evidence="5">
    <location>
        <begin position="155"/>
        <end position="157"/>
    </location>
</feature>
<feature type="helix" evidence="5">
    <location>
        <begin position="161"/>
        <end position="170"/>
    </location>
</feature>
<reference key="1">
    <citation type="journal article" date="1999" name="Microb. Pathog.">
        <title>Cloning, expression and significance of MPT53 for identification of secreted proteins of Mycobacterium tuberculosis.</title>
        <authorList>
            <person name="Wiker H.G."/>
            <person name="Michell S.L."/>
            <person name="Hewinson R.G."/>
            <person name="Spierings E."/>
            <person name="Nagai S."/>
            <person name="Harboe M."/>
        </authorList>
    </citation>
    <scope>NUCLEOTIDE SEQUENCE [GENOMIC DNA]</scope>
    <scope>PROTEIN SEQUENCE OF 39-68</scope>
</reference>
<reference key="2">
    <citation type="journal article" date="1998" name="Nature">
        <title>Deciphering the biology of Mycobacterium tuberculosis from the complete genome sequence.</title>
        <authorList>
            <person name="Cole S.T."/>
            <person name="Brosch R."/>
            <person name="Parkhill J."/>
            <person name="Garnier T."/>
            <person name="Churcher C.M."/>
            <person name="Harris D.E."/>
            <person name="Gordon S.V."/>
            <person name="Eiglmeier K."/>
            <person name="Gas S."/>
            <person name="Barry C.E. III"/>
            <person name="Tekaia F."/>
            <person name="Badcock K."/>
            <person name="Basham D."/>
            <person name="Brown D."/>
            <person name="Chillingworth T."/>
            <person name="Connor R."/>
            <person name="Davies R.M."/>
            <person name="Devlin K."/>
            <person name="Feltwell T."/>
            <person name="Gentles S."/>
            <person name="Hamlin N."/>
            <person name="Holroyd S."/>
            <person name="Hornsby T."/>
            <person name="Jagels K."/>
            <person name="Krogh A."/>
            <person name="McLean J."/>
            <person name="Moule S."/>
            <person name="Murphy L.D."/>
            <person name="Oliver S."/>
            <person name="Osborne J."/>
            <person name="Quail M.A."/>
            <person name="Rajandream M.A."/>
            <person name="Rogers J."/>
            <person name="Rutter S."/>
            <person name="Seeger K."/>
            <person name="Skelton S."/>
            <person name="Squares S."/>
            <person name="Squares R."/>
            <person name="Sulston J.E."/>
            <person name="Taylor K."/>
            <person name="Whitehead S."/>
            <person name="Barrell B.G."/>
        </authorList>
    </citation>
    <scope>NUCLEOTIDE SEQUENCE [LARGE SCALE GENOMIC DNA]</scope>
    <source>
        <strain>ATCC 25618 / H37Rv</strain>
    </source>
</reference>
<reference key="3">
    <citation type="journal article" date="2011" name="Mol. Cell. Proteomics">
        <title>Proteogenomic analysis of Mycobacterium tuberculosis by high resolution mass spectrometry.</title>
        <authorList>
            <person name="Kelkar D.S."/>
            <person name="Kumar D."/>
            <person name="Kumar P."/>
            <person name="Balakrishnan L."/>
            <person name="Muthusamy B."/>
            <person name="Yadav A.K."/>
            <person name="Shrivastava P."/>
            <person name="Marimuthu A."/>
            <person name="Anand S."/>
            <person name="Sundaram H."/>
            <person name="Kingsbury R."/>
            <person name="Harsha H.C."/>
            <person name="Nair B."/>
            <person name="Prasad T.S."/>
            <person name="Chauhan D.S."/>
            <person name="Katoch K."/>
            <person name="Katoch V.M."/>
            <person name="Kumar P."/>
            <person name="Chaerkady R."/>
            <person name="Ramachandran S."/>
            <person name="Dash D."/>
            <person name="Pandey A."/>
        </authorList>
    </citation>
    <scope>IDENTIFICATION BY MASS SPECTROMETRY [LARGE SCALE ANALYSIS]</scope>
    <source>
        <strain>ATCC 25618 / H37Rv</strain>
    </source>
</reference>
<reference key="4">
    <citation type="journal article" date="2004" name="J. Biol. Chem.">
        <title>Gram-positive DsbE proteins function differently from Gram-negative DsbE homologs. A structure to function analysis of DsbE from Mycobacterium tuberculosis.</title>
        <authorList>
            <person name="Goulding C.W."/>
            <person name="Apostol M.I."/>
            <person name="Gleiter S."/>
            <person name="Parseghian A."/>
            <person name="Bardwell J."/>
            <person name="Gennaro M."/>
            <person name="Eisenberg D."/>
        </authorList>
    </citation>
    <scope>X-RAY CRYSTALLOGRAPHY (1.12 ANGSTROMS) OF 38-173</scope>
    <scope>FUNCTION</scope>
</reference>
<comment type="function">
    <text evidence="3">Disulfide oxidoreductase that catalyzes the oxidation of reduced, unfolded secreted proteins to form disulfide bonds. Despite a weak homology to thioredoxin this cannot serve as a substrate for thioredoxin reductase.</text>
</comment>
<comment type="subcellular location">
    <subcellularLocation>
        <location>Secreted</location>
    </subcellularLocation>
</comment>
<comment type="similarity">
    <text evidence="4">Belongs to the thioredoxin family.</text>
</comment>
<accession>P9WG65</accession>
<accession>L0TAX0</accession>
<accession>P0A618</accession>
<accession>Q10804</accession>
<name>MPT53_MYCTU</name>
<proteinExistence type="evidence at protein level"/>
<keyword id="KW-0002">3D-structure</keyword>
<keyword id="KW-0903">Direct protein sequencing</keyword>
<keyword id="KW-1015">Disulfide bond</keyword>
<keyword id="KW-0676">Redox-active center</keyword>
<keyword id="KW-1185">Reference proteome</keyword>
<keyword id="KW-0964">Secreted</keyword>
<keyword id="KW-0732">Signal</keyword>
<evidence type="ECO:0000255" key="1">
    <source>
        <dbReference type="PROSITE-ProRule" id="PRU00691"/>
    </source>
</evidence>
<evidence type="ECO:0000269" key="2">
    <source>
    </source>
</evidence>
<evidence type="ECO:0000269" key="3">
    <source>
    </source>
</evidence>
<evidence type="ECO:0000305" key="4"/>
<evidence type="ECO:0007829" key="5">
    <source>
        <dbReference type="PDB" id="1LU4"/>
    </source>
</evidence>
<dbReference type="EMBL" id="Y09725">
    <property type="protein sequence ID" value="CAA70890.1"/>
    <property type="molecule type" value="Genomic_DNA"/>
</dbReference>
<dbReference type="EMBL" id="AL123456">
    <property type="protein sequence ID" value="CCP45680.1"/>
    <property type="molecule type" value="Genomic_DNA"/>
</dbReference>
<dbReference type="PIR" id="A70924">
    <property type="entry name" value="A70924"/>
</dbReference>
<dbReference type="RefSeq" id="NP_217394.1">
    <property type="nucleotide sequence ID" value="NC_000962.3"/>
</dbReference>
<dbReference type="RefSeq" id="WP_003414654.1">
    <property type="nucleotide sequence ID" value="NZ_NVQJ01000006.1"/>
</dbReference>
<dbReference type="PDB" id="1LU4">
    <property type="method" value="X-ray"/>
    <property type="resolution" value="1.12 A"/>
    <property type="chains" value="A=38-173"/>
</dbReference>
<dbReference type="PDBsum" id="1LU4"/>
<dbReference type="SMR" id="P9WG65"/>
<dbReference type="FunCoup" id="P9WG65">
    <property type="interactions" value="1"/>
</dbReference>
<dbReference type="STRING" id="83332.Rv2878c"/>
<dbReference type="PaxDb" id="83332-Rv2878c"/>
<dbReference type="DNASU" id="887184"/>
<dbReference type="GeneID" id="887184"/>
<dbReference type="KEGG" id="mtu:Rv2878c"/>
<dbReference type="KEGG" id="mtv:RVBD_2878c"/>
<dbReference type="TubercuList" id="Rv2878c"/>
<dbReference type="eggNOG" id="COG0526">
    <property type="taxonomic scope" value="Bacteria"/>
</dbReference>
<dbReference type="InParanoid" id="P9WG65"/>
<dbReference type="OrthoDB" id="9790194at2"/>
<dbReference type="PhylomeDB" id="P9WG65"/>
<dbReference type="EvolutionaryTrace" id="P9WG65"/>
<dbReference type="Proteomes" id="UP000001584">
    <property type="component" value="Chromosome"/>
</dbReference>
<dbReference type="GO" id="GO:0005576">
    <property type="term" value="C:extracellular region"/>
    <property type="evidence" value="ECO:0007005"/>
    <property type="project" value="MTBBASE"/>
</dbReference>
<dbReference type="GO" id="GO:0016209">
    <property type="term" value="F:antioxidant activity"/>
    <property type="evidence" value="ECO:0007669"/>
    <property type="project" value="InterPro"/>
</dbReference>
<dbReference type="GO" id="GO:0016491">
    <property type="term" value="F:oxidoreductase activity"/>
    <property type="evidence" value="ECO:0000314"/>
    <property type="project" value="MTBBASE"/>
</dbReference>
<dbReference type="GO" id="GO:0045454">
    <property type="term" value="P:cell redox homeostasis"/>
    <property type="evidence" value="ECO:0000314"/>
    <property type="project" value="MTBBASE"/>
</dbReference>
<dbReference type="CDD" id="cd03011">
    <property type="entry name" value="TlpA_like_ScsD_MtbDsbE"/>
    <property type="match status" value="1"/>
</dbReference>
<dbReference type="FunFam" id="3.40.30.10:FF:000238">
    <property type="entry name" value="Soluble secreted antigen Mpt53"/>
    <property type="match status" value="1"/>
</dbReference>
<dbReference type="Gene3D" id="3.40.30.10">
    <property type="entry name" value="Glutaredoxin"/>
    <property type="match status" value="1"/>
</dbReference>
<dbReference type="InterPro" id="IPR000866">
    <property type="entry name" value="AhpC/TSA"/>
</dbReference>
<dbReference type="InterPro" id="IPR036249">
    <property type="entry name" value="Thioredoxin-like_sf"/>
</dbReference>
<dbReference type="InterPro" id="IPR013766">
    <property type="entry name" value="Thioredoxin_domain"/>
</dbReference>
<dbReference type="InterPro" id="IPR050553">
    <property type="entry name" value="Thioredoxin_ResA/DsbE_sf"/>
</dbReference>
<dbReference type="PANTHER" id="PTHR42852">
    <property type="entry name" value="THIOL:DISULFIDE INTERCHANGE PROTEIN DSBE"/>
    <property type="match status" value="1"/>
</dbReference>
<dbReference type="PANTHER" id="PTHR42852:SF17">
    <property type="entry name" value="THIOREDOXIN-LIKE PROTEIN HI_1115"/>
    <property type="match status" value="1"/>
</dbReference>
<dbReference type="Pfam" id="PF00578">
    <property type="entry name" value="AhpC-TSA"/>
    <property type="match status" value="1"/>
</dbReference>
<dbReference type="SUPFAM" id="SSF52833">
    <property type="entry name" value="Thioredoxin-like"/>
    <property type="match status" value="1"/>
</dbReference>
<dbReference type="PROSITE" id="PS51352">
    <property type="entry name" value="THIOREDOXIN_2"/>
    <property type="match status" value="1"/>
</dbReference>
<organism>
    <name type="scientific">Mycobacterium tuberculosis (strain ATCC 25618 / H37Rv)</name>
    <dbReference type="NCBI Taxonomy" id="83332"/>
    <lineage>
        <taxon>Bacteria</taxon>
        <taxon>Bacillati</taxon>
        <taxon>Actinomycetota</taxon>
        <taxon>Actinomycetes</taxon>
        <taxon>Mycobacteriales</taxon>
        <taxon>Mycobacteriaceae</taxon>
        <taxon>Mycobacterium</taxon>
        <taxon>Mycobacterium tuberculosis complex</taxon>
    </lineage>
</organism>
<sequence length="173" mass="18383">MSLRLVSPIKAFADGIVAVAIAVVLMFGLANTPRAVAADERLQFTATTLSGAPFDGASLQGKPAVLWFWTPWCPFCNAEAPSLSQVAAANPAVTFVGIATRADVGAMQSFVSKYNLNFTNLNDADGVIWARYNVPWQPAFVFYRADGTSTFVNNPTAAMSQDELSGRVAALTS</sequence>
<protein>
    <recommendedName>
        <fullName>Soluble secreted antigen MPT53</fullName>
    </recommendedName>
</protein>